<accession>Q255B5</accession>
<proteinExistence type="inferred from homology"/>
<gene>
    <name evidence="1" type="primary">prfA</name>
    <name type="ordered locus">CF0351</name>
</gene>
<dbReference type="EMBL" id="AP006861">
    <property type="protein sequence ID" value="BAE81123.1"/>
    <property type="molecule type" value="Genomic_DNA"/>
</dbReference>
<dbReference type="RefSeq" id="WP_011457903.1">
    <property type="nucleotide sequence ID" value="NC_007899.1"/>
</dbReference>
<dbReference type="SMR" id="Q255B5"/>
<dbReference type="STRING" id="264202.CF0351"/>
<dbReference type="KEGG" id="cfe:CF0351"/>
<dbReference type="eggNOG" id="COG0216">
    <property type="taxonomic scope" value="Bacteria"/>
</dbReference>
<dbReference type="HOGENOM" id="CLU_036856_0_1_0"/>
<dbReference type="OrthoDB" id="9806673at2"/>
<dbReference type="Proteomes" id="UP000001260">
    <property type="component" value="Chromosome"/>
</dbReference>
<dbReference type="GO" id="GO:0005737">
    <property type="term" value="C:cytoplasm"/>
    <property type="evidence" value="ECO:0007669"/>
    <property type="project" value="UniProtKB-SubCell"/>
</dbReference>
<dbReference type="GO" id="GO:0016149">
    <property type="term" value="F:translation release factor activity, codon specific"/>
    <property type="evidence" value="ECO:0007669"/>
    <property type="project" value="UniProtKB-UniRule"/>
</dbReference>
<dbReference type="FunFam" id="3.30.160.20:FF:000004">
    <property type="entry name" value="Peptide chain release factor 1"/>
    <property type="match status" value="1"/>
</dbReference>
<dbReference type="FunFam" id="3.30.70.1660:FF:000002">
    <property type="entry name" value="Peptide chain release factor 1"/>
    <property type="match status" value="1"/>
</dbReference>
<dbReference type="FunFam" id="3.30.70.1660:FF:000004">
    <property type="entry name" value="Peptide chain release factor 1"/>
    <property type="match status" value="1"/>
</dbReference>
<dbReference type="Gene3D" id="3.30.160.20">
    <property type="match status" value="1"/>
</dbReference>
<dbReference type="Gene3D" id="3.30.70.1660">
    <property type="match status" value="2"/>
</dbReference>
<dbReference type="Gene3D" id="6.10.140.1950">
    <property type="match status" value="1"/>
</dbReference>
<dbReference type="HAMAP" id="MF_00093">
    <property type="entry name" value="Rel_fac_1"/>
    <property type="match status" value="1"/>
</dbReference>
<dbReference type="InterPro" id="IPR005139">
    <property type="entry name" value="PCRF"/>
</dbReference>
<dbReference type="InterPro" id="IPR000352">
    <property type="entry name" value="Pep_chain_release_fac_I"/>
</dbReference>
<dbReference type="InterPro" id="IPR045853">
    <property type="entry name" value="Pep_chain_release_fac_I_sf"/>
</dbReference>
<dbReference type="InterPro" id="IPR050057">
    <property type="entry name" value="Prokaryotic/Mito_RF"/>
</dbReference>
<dbReference type="InterPro" id="IPR004373">
    <property type="entry name" value="RF-1"/>
</dbReference>
<dbReference type="NCBIfam" id="TIGR00019">
    <property type="entry name" value="prfA"/>
    <property type="match status" value="1"/>
</dbReference>
<dbReference type="NCBIfam" id="NF001859">
    <property type="entry name" value="PRK00591.1"/>
    <property type="match status" value="1"/>
</dbReference>
<dbReference type="PANTHER" id="PTHR43804">
    <property type="entry name" value="LD18447P"/>
    <property type="match status" value="1"/>
</dbReference>
<dbReference type="PANTHER" id="PTHR43804:SF7">
    <property type="entry name" value="LD18447P"/>
    <property type="match status" value="1"/>
</dbReference>
<dbReference type="Pfam" id="PF03462">
    <property type="entry name" value="PCRF"/>
    <property type="match status" value="1"/>
</dbReference>
<dbReference type="Pfam" id="PF00472">
    <property type="entry name" value="RF-1"/>
    <property type="match status" value="1"/>
</dbReference>
<dbReference type="SMART" id="SM00937">
    <property type="entry name" value="PCRF"/>
    <property type="match status" value="1"/>
</dbReference>
<dbReference type="SUPFAM" id="SSF75620">
    <property type="entry name" value="Release factor"/>
    <property type="match status" value="1"/>
</dbReference>
<dbReference type="PROSITE" id="PS00745">
    <property type="entry name" value="RF_PROK_I"/>
    <property type="match status" value="1"/>
</dbReference>
<name>RF1_CHLFF</name>
<protein>
    <recommendedName>
        <fullName evidence="1">Peptide chain release factor 1</fullName>
        <shortName evidence="1">RF-1</shortName>
    </recommendedName>
</protein>
<reference key="1">
    <citation type="journal article" date="2006" name="DNA Res.">
        <title>Genome sequence of the cat pathogen, Chlamydophila felis.</title>
        <authorList>
            <person name="Azuma Y."/>
            <person name="Hirakawa H."/>
            <person name="Yamashita A."/>
            <person name="Cai Y."/>
            <person name="Rahman M.A."/>
            <person name="Suzuki H."/>
            <person name="Mitaku S."/>
            <person name="Toh H."/>
            <person name="Goto S."/>
            <person name="Murakami T."/>
            <person name="Sugi K."/>
            <person name="Hayashi H."/>
            <person name="Fukushi H."/>
            <person name="Hattori M."/>
            <person name="Kuhara S."/>
            <person name="Shirai M."/>
        </authorList>
    </citation>
    <scope>NUCLEOTIDE SEQUENCE [LARGE SCALE GENOMIC DNA]</scope>
    <source>
        <strain>Fe/C-56</strain>
    </source>
</reference>
<sequence length="361" mass="40798">MEKKILEYLKRLEEVEVKISDPEIFNNPKEYSSLSREHARLTELKNVYDKVLRHEKILNDDKHALAQEKDPEMIAMLEEGIQSGKSEIEKLYKILENLLVPPDPDDDLNVIMELRAGTGGDEAALFVGDCVRMYHLYASAKGWKYEELSASESDIGGYKEYVMGISGTGVKRLLQYEAGTHRVQRVPETETQGRVHTSAITVAVLPEPAEDDEEVFVDEKDLKIDTFRASGAGGQHVNVTDSAVRITHLPTGVVVTCQDERSQHKNKAKAMRILKARIRDAEMQRRHKEASAMRSAQVGSGDRSERIRTYNFSQNRVTDHRIGLTLYNLDKVMEGDLDTITSALVSHAYHQLFQNGNEENS</sequence>
<feature type="chain" id="PRO_0000263252" description="Peptide chain release factor 1">
    <location>
        <begin position="1"/>
        <end position="361"/>
    </location>
</feature>
<feature type="modified residue" description="N5-methylglutamine" evidence="1">
    <location>
        <position position="235"/>
    </location>
</feature>
<evidence type="ECO:0000255" key="1">
    <source>
        <dbReference type="HAMAP-Rule" id="MF_00093"/>
    </source>
</evidence>
<comment type="function">
    <text evidence="1">Peptide chain release factor 1 directs the termination of translation in response to the peptide chain termination codons UAG and UAA.</text>
</comment>
<comment type="subcellular location">
    <subcellularLocation>
        <location evidence="1">Cytoplasm</location>
    </subcellularLocation>
</comment>
<comment type="PTM">
    <text evidence="1">Methylated by PrmC. Methylation increases the termination efficiency of RF1.</text>
</comment>
<comment type="similarity">
    <text evidence="1">Belongs to the prokaryotic/mitochondrial release factor family.</text>
</comment>
<keyword id="KW-0963">Cytoplasm</keyword>
<keyword id="KW-0488">Methylation</keyword>
<keyword id="KW-0648">Protein biosynthesis</keyword>
<organism>
    <name type="scientific">Chlamydia felis (strain Fe/C-56)</name>
    <name type="common">Chlamydophila felis</name>
    <dbReference type="NCBI Taxonomy" id="264202"/>
    <lineage>
        <taxon>Bacteria</taxon>
        <taxon>Pseudomonadati</taxon>
        <taxon>Chlamydiota</taxon>
        <taxon>Chlamydiia</taxon>
        <taxon>Chlamydiales</taxon>
        <taxon>Chlamydiaceae</taxon>
        <taxon>Chlamydia/Chlamydophila group</taxon>
        <taxon>Chlamydia</taxon>
    </lineage>
</organism>